<evidence type="ECO:0000255" key="1">
    <source>
        <dbReference type="HAMAP-Rule" id="MF_00259"/>
    </source>
</evidence>
<proteinExistence type="inferred from homology"/>
<accession>Q8PI37</accession>
<organism>
    <name type="scientific">Xanthomonas axonopodis pv. citri (strain 306)</name>
    <dbReference type="NCBI Taxonomy" id="190486"/>
    <lineage>
        <taxon>Bacteria</taxon>
        <taxon>Pseudomonadati</taxon>
        <taxon>Pseudomonadota</taxon>
        <taxon>Gammaproteobacteria</taxon>
        <taxon>Lysobacterales</taxon>
        <taxon>Lysobacteraceae</taxon>
        <taxon>Xanthomonas</taxon>
    </lineage>
</organism>
<reference key="1">
    <citation type="journal article" date="2002" name="Nature">
        <title>Comparison of the genomes of two Xanthomonas pathogens with differing host specificities.</title>
        <authorList>
            <person name="da Silva A.C.R."/>
            <person name="Ferro J.A."/>
            <person name="Reinach F.C."/>
            <person name="Farah C.S."/>
            <person name="Furlan L.R."/>
            <person name="Quaggio R.B."/>
            <person name="Monteiro-Vitorello C.B."/>
            <person name="Van Sluys M.A."/>
            <person name="Almeida N.F. Jr."/>
            <person name="Alves L.M.C."/>
            <person name="do Amaral A.M."/>
            <person name="Bertolini M.C."/>
            <person name="Camargo L.E.A."/>
            <person name="Camarotte G."/>
            <person name="Cannavan F."/>
            <person name="Cardozo J."/>
            <person name="Chambergo F."/>
            <person name="Ciapina L.P."/>
            <person name="Cicarelli R.M.B."/>
            <person name="Coutinho L.L."/>
            <person name="Cursino-Santos J.R."/>
            <person name="El-Dorry H."/>
            <person name="Faria J.B."/>
            <person name="Ferreira A.J.S."/>
            <person name="Ferreira R.C.C."/>
            <person name="Ferro M.I.T."/>
            <person name="Formighieri E.F."/>
            <person name="Franco M.C."/>
            <person name="Greggio C.C."/>
            <person name="Gruber A."/>
            <person name="Katsuyama A.M."/>
            <person name="Kishi L.T."/>
            <person name="Leite R.P."/>
            <person name="Lemos E.G.M."/>
            <person name="Lemos M.V.F."/>
            <person name="Locali E.C."/>
            <person name="Machado M.A."/>
            <person name="Madeira A.M.B.N."/>
            <person name="Martinez-Rossi N.M."/>
            <person name="Martins E.C."/>
            <person name="Meidanis J."/>
            <person name="Menck C.F.M."/>
            <person name="Miyaki C.Y."/>
            <person name="Moon D.H."/>
            <person name="Moreira L.M."/>
            <person name="Novo M.T.M."/>
            <person name="Okura V.K."/>
            <person name="Oliveira M.C."/>
            <person name="Oliveira V.R."/>
            <person name="Pereira H.A."/>
            <person name="Rossi A."/>
            <person name="Sena J.A.D."/>
            <person name="Silva C."/>
            <person name="de Souza R.F."/>
            <person name="Spinola L.A.F."/>
            <person name="Takita M.A."/>
            <person name="Tamura R.E."/>
            <person name="Teixeira E.C."/>
            <person name="Tezza R.I.D."/>
            <person name="Trindade dos Santos M."/>
            <person name="Truffi D."/>
            <person name="Tsai S.M."/>
            <person name="White F.F."/>
            <person name="Setubal J.C."/>
            <person name="Kitajima J.P."/>
        </authorList>
    </citation>
    <scope>NUCLEOTIDE SEQUENCE [LARGE SCALE GENOMIC DNA]</scope>
    <source>
        <strain>306</strain>
    </source>
</reference>
<name>GCST_XANAC</name>
<comment type="function">
    <text evidence="1">The glycine cleavage system catalyzes the degradation of glycine.</text>
</comment>
<comment type="catalytic activity">
    <reaction evidence="1">
        <text>N(6)-[(R)-S(8)-aminomethyldihydrolipoyl]-L-lysyl-[protein] + (6S)-5,6,7,8-tetrahydrofolate = N(6)-[(R)-dihydrolipoyl]-L-lysyl-[protein] + (6R)-5,10-methylene-5,6,7,8-tetrahydrofolate + NH4(+)</text>
        <dbReference type="Rhea" id="RHEA:16945"/>
        <dbReference type="Rhea" id="RHEA-COMP:10475"/>
        <dbReference type="Rhea" id="RHEA-COMP:10492"/>
        <dbReference type="ChEBI" id="CHEBI:15636"/>
        <dbReference type="ChEBI" id="CHEBI:28938"/>
        <dbReference type="ChEBI" id="CHEBI:57453"/>
        <dbReference type="ChEBI" id="CHEBI:83100"/>
        <dbReference type="ChEBI" id="CHEBI:83143"/>
        <dbReference type="EC" id="2.1.2.10"/>
    </reaction>
</comment>
<comment type="subunit">
    <text evidence="1">The glycine cleavage system is composed of four proteins: P, T, L and H.</text>
</comment>
<comment type="similarity">
    <text evidence="1">Belongs to the GcvT family.</text>
</comment>
<keyword id="KW-0032">Aminotransferase</keyword>
<keyword id="KW-0808">Transferase</keyword>
<protein>
    <recommendedName>
        <fullName evidence="1">Aminomethyltransferase</fullName>
        <ecNumber evidence="1">2.1.2.10</ecNumber>
    </recommendedName>
    <alternativeName>
        <fullName evidence="1">Glycine cleavage system T protein</fullName>
    </alternativeName>
</protein>
<gene>
    <name evidence="1" type="primary">gcvT</name>
    <name type="ordered locus">XAC3061</name>
</gene>
<sequence length="369" mass="40361">MTQKTILNDTHRALGAKMVDFGGWDMPIHYGSQLDEHHQVRRDAGMFDVSHMTVVDLHGARVREFLRYLLANSVDKLKVSGKALYTCMLNPQGGVIDDLIVYYMTEDFFRLVVNAATREKDLQWIGEQAARFDVRVEERSDFAMIAVQGPSARTKVIDLLDPADTAAASKLGRFAALQTRSRDGIELFLARTGYTGEDGFEIVLPQQAAVAFWNALLAQGVKPAGLGARDTLRLEAGMNLYGQDMDDGVTPYEAGLAWTIALDEGRDFIGRSVLESQKAQGAPRQLIGVVMDEKGVLRHGQTVLTANGEGEILSGTFSPTLGKAIAFARVPAGSIEQLRVDIRGKQVPLRAVKFPFVRDGQAQPGVLGD</sequence>
<dbReference type="EC" id="2.1.2.10" evidence="1"/>
<dbReference type="EMBL" id="AE008923">
    <property type="protein sequence ID" value="AAM37906.1"/>
    <property type="molecule type" value="Genomic_DNA"/>
</dbReference>
<dbReference type="RefSeq" id="WP_003482420.1">
    <property type="nucleotide sequence ID" value="NC_003919.1"/>
</dbReference>
<dbReference type="SMR" id="Q8PI37"/>
<dbReference type="GeneID" id="66912134"/>
<dbReference type="KEGG" id="xac:XAC3061"/>
<dbReference type="eggNOG" id="COG0404">
    <property type="taxonomic scope" value="Bacteria"/>
</dbReference>
<dbReference type="HOGENOM" id="CLU_007884_10_2_6"/>
<dbReference type="Proteomes" id="UP000000576">
    <property type="component" value="Chromosome"/>
</dbReference>
<dbReference type="GO" id="GO:0005829">
    <property type="term" value="C:cytosol"/>
    <property type="evidence" value="ECO:0007669"/>
    <property type="project" value="TreeGrafter"/>
</dbReference>
<dbReference type="GO" id="GO:0005960">
    <property type="term" value="C:glycine cleavage complex"/>
    <property type="evidence" value="ECO:0007669"/>
    <property type="project" value="InterPro"/>
</dbReference>
<dbReference type="GO" id="GO:0004047">
    <property type="term" value="F:aminomethyltransferase activity"/>
    <property type="evidence" value="ECO:0007669"/>
    <property type="project" value="UniProtKB-UniRule"/>
</dbReference>
<dbReference type="GO" id="GO:0008483">
    <property type="term" value="F:transaminase activity"/>
    <property type="evidence" value="ECO:0007669"/>
    <property type="project" value="UniProtKB-KW"/>
</dbReference>
<dbReference type="GO" id="GO:0019464">
    <property type="term" value="P:glycine decarboxylation via glycine cleavage system"/>
    <property type="evidence" value="ECO:0007669"/>
    <property type="project" value="UniProtKB-UniRule"/>
</dbReference>
<dbReference type="FunFam" id="2.40.30.110:FF:000001">
    <property type="entry name" value="Aminomethyltransferase"/>
    <property type="match status" value="1"/>
</dbReference>
<dbReference type="FunFam" id="3.30.70.1400:FF:000001">
    <property type="entry name" value="Aminomethyltransferase"/>
    <property type="match status" value="1"/>
</dbReference>
<dbReference type="FunFam" id="4.10.1250.10:FF:000001">
    <property type="entry name" value="Aminomethyltransferase"/>
    <property type="match status" value="1"/>
</dbReference>
<dbReference type="Gene3D" id="2.40.30.110">
    <property type="entry name" value="Aminomethyltransferase beta-barrel domains"/>
    <property type="match status" value="1"/>
</dbReference>
<dbReference type="Gene3D" id="3.30.70.1400">
    <property type="entry name" value="Aminomethyltransferase beta-barrel domains"/>
    <property type="match status" value="1"/>
</dbReference>
<dbReference type="Gene3D" id="4.10.1250.10">
    <property type="entry name" value="Aminomethyltransferase fragment"/>
    <property type="match status" value="1"/>
</dbReference>
<dbReference type="Gene3D" id="3.30.1360.120">
    <property type="entry name" value="Probable tRNA modification gtpase trme, domain 1"/>
    <property type="match status" value="1"/>
</dbReference>
<dbReference type="HAMAP" id="MF_00259">
    <property type="entry name" value="GcvT"/>
    <property type="match status" value="1"/>
</dbReference>
<dbReference type="InterPro" id="IPR006223">
    <property type="entry name" value="GCS_T"/>
</dbReference>
<dbReference type="InterPro" id="IPR022903">
    <property type="entry name" value="GCS_T_bac"/>
</dbReference>
<dbReference type="InterPro" id="IPR013977">
    <property type="entry name" value="GCST_C"/>
</dbReference>
<dbReference type="InterPro" id="IPR006222">
    <property type="entry name" value="GCV_T_N"/>
</dbReference>
<dbReference type="InterPro" id="IPR028896">
    <property type="entry name" value="GcvT/YgfZ/DmdA"/>
</dbReference>
<dbReference type="InterPro" id="IPR029043">
    <property type="entry name" value="GcvT/YgfZ_C"/>
</dbReference>
<dbReference type="InterPro" id="IPR027266">
    <property type="entry name" value="TrmE/GcvT_dom1"/>
</dbReference>
<dbReference type="NCBIfam" id="TIGR00528">
    <property type="entry name" value="gcvT"/>
    <property type="match status" value="1"/>
</dbReference>
<dbReference type="NCBIfam" id="NF001567">
    <property type="entry name" value="PRK00389.1"/>
    <property type="match status" value="1"/>
</dbReference>
<dbReference type="PANTHER" id="PTHR43757">
    <property type="entry name" value="AMINOMETHYLTRANSFERASE"/>
    <property type="match status" value="1"/>
</dbReference>
<dbReference type="PANTHER" id="PTHR43757:SF2">
    <property type="entry name" value="AMINOMETHYLTRANSFERASE, MITOCHONDRIAL"/>
    <property type="match status" value="1"/>
</dbReference>
<dbReference type="Pfam" id="PF01571">
    <property type="entry name" value="GCV_T"/>
    <property type="match status" value="1"/>
</dbReference>
<dbReference type="Pfam" id="PF08669">
    <property type="entry name" value="GCV_T_C"/>
    <property type="match status" value="1"/>
</dbReference>
<dbReference type="PIRSF" id="PIRSF006487">
    <property type="entry name" value="GcvT"/>
    <property type="match status" value="1"/>
</dbReference>
<dbReference type="SUPFAM" id="SSF101790">
    <property type="entry name" value="Aminomethyltransferase beta-barrel domain"/>
    <property type="match status" value="1"/>
</dbReference>
<dbReference type="SUPFAM" id="SSF103025">
    <property type="entry name" value="Folate-binding domain"/>
    <property type="match status" value="1"/>
</dbReference>
<feature type="chain" id="PRO_0000122614" description="Aminomethyltransferase">
    <location>
        <begin position="1"/>
        <end position="369"/>
    </location>
</feature>